<keyword id="KW-0378">Hydrolase</keyword>
<keyword id="KW-0460">Magnesium</keyword>
<keyword id="KW-0479">Metal-binding</keyword>
<keyword id="KW-0540">Nuclease</keyword>
<keyword id="KW-1185">Reference proteome</keyword>
<keyword id="KW-1277">Toxin-antitoxin system</keyword>
<gene>
    <name evidence="2" type="primary">vapC1</name>
    <name type="ordered locus">MT0071</name>
</gene>
<reference key="1">
    <citation type="journal article" date="2002" name="J. Bacteriol.">
        <title>Whole-genome comparison of Mycobacterium tuberculosis clinical and laboratory strains.</title>
        <authorList>
            <person name="Fleischmann R.D."/>
            <person name="Alland D."/>
            <person name="Eisen J.A."/>
            <person name="Carpenter L."/>
            <person name="White O."/>
            <person name="Peterson J.D."/>
            <person name="DeBoy R.T."/>
            <person name="Dodson R.J."/>
            <person name="Gwinn M.L."/>
            <person name="Haft D.H."/>
            <person name="Hickey E.K."/>
            <person name="Kolonay J.F."/>
            <person name="Nelson W.C."/>
            <person name="Umayam L.A."/>
            <person name="Ermolaeva M.D."/>
            <person name="Salzberg S.L."/>
            <person name="Delcher A."/>
            <person name="Utterback T.R."/>
            <person name="Weidman J.F."/>
            <person name="Khouri H.M."/>
            <person name="Gill J."/>
            <person name="Mikula A."/>
            <person name="Bishai W."/>
            <person name="Jacobs W.R. Jr."/>
            <person name="Venter J.C."/>
            <person name="Fraser C.M."/>
        </authorList>
    </citation>
    <scope>NUCLEOTIDE SEQUENCE [LARGE SCALE GENOMIC DNA]</scope>
    <source>
        <strain>CDC 1551 / Oshkosh</strain>
    </source>
</reference>
<comment type="function">
    <text evidence="1">Toxic component of a type II toxin-antitoxin (TA) system. The cognate antitoxin is VapB1 (By similarity).</text>
</comment>
<comment type="cofactor">
    <cofactor evidence="2">
        <name>Mg(2+)</name>
        <dbReference type="ChEBI" id="CHEBI:18420"/>
    </cofactor>
</comment>
<comment type="similarity">
    <text evidence="2">Belongs to the PINc/VapC protein family.</text>
</comment>
<organism>
    <name type="scientific">Mycobacterium tuberculosis (strain CDC 1551 / Oshkosh)</name>
    <dbReference type="NCBI Taxonomy" id="83331"/>
    <lineage>
        <taxon>Bacteria</taxon>
        <taxon>Bacillati</taxon>
        <taxon>Actinomycetota</taxon>
        <taxon>Actinomycetes</taxon>
        <taxon>Mycobacteriales</taxon>
        <taxon>Mycobacteriaceae</taxon>
        <taxon>Mycobacterium</taxon>
        <taxon>Mycobacterium tuberculosis complex</taxon>
    </lineage>
</organism>
<name>VAPC1_MYCTO</name>
<sequence length="133" mass="14372">MDECVVDAAAVVDALAGKGASAIVLRGLLKESISNAPHLLDAEVGHALRRAVLSDEISEEQARAALDALPYLIDNRYPHSPRLIEYTWQLRHNVTFYDALYVALATALDVPLLTGDSRLAAAPGLPCEIKLVR</sequence>
<evidence type="ECO:0000250" key="1"/>
<evidence type="ECO:0000255" key="2">
    <source>
        <dbReference type="HAMAP-Rule" id="MF_00265"/>
    </source>
</evidence>
<feature type="chain" id="PRO_0000428565" description="Ribonuclease VapC1">
    <location>
        <begin position="1"/>
        <end position="133"/>
    </location>
</feature>
<feature type="binding site" evidence="2">
    <location>
        <position position="7"/>
    </location>
    <ligand>
        <name>Mg(2+)</name>
        <dbReference type="ChEBI" id="CHEBI:18420"/>
    </ligand>
</feature>
<feature type="binding site" evidence="2">
    <location>
        <position position="98"/>
    </location>
    <ligand>
        <name>Mg(2+)</name>
        <dbReference type="ChEBI" id="CHEBI:18420"/>
    </ligand>
</feature>
<accession>P9WFC0</accession>
<accession>L0T478</accession>
<accession>O53610</accession>
<accession>Q7DAI7</accession>
<protein>
    <recommendedName>
        <fullName evidence="2">Ribonuclease VapC1</fullName>
        <shortName evidence="2">RNase VapC1</shortName>
        <ecNumber evidence="2">3.1.-.-</ecNumber>
    </recommendedName>
    <alternativeName>
        <fullName evidence="2">Toxin VapC1</fullName>
    </alternativeName>
</protein>
<proteinExistence type="inferred from homology"/>
<dbReference type="EC" id="3.1.-.-" evidence="2"/>
<dbReference type="EMBL" id="AE000516">
    <property type="protein sequence ID" value="AAK44295.1"/>
    <property type="molecule type" value="Genomic_DNA"/>
</dbReference>
<dbReference type="PIR" id="B70848">
    <property type="entry name" value="B70848"/>
</dbReference>
<dbReference type="RefSeq" id="WP_003400580.1">
    <property type="nucleotide sequence ID" value="NZ_KK341227.1"/>
</dbReference>
<dbReference type="SMR" id="P9WFC0"/>
<dbReference type="KEGG" id="mtc:MT0071"/>
<dbReference type="PATRIC" id="fig|83331.31.peg.74"/>
<dbReference type="HOGENOM" id="CLU_121774_0_0_11"/>
<dbReference type="Proteomes" id="UP000001020">
    <property type="component" value="Chromosome"/>
</dbReference>
<dbReference type="GO" id="GO:0000287">
    <property type="term" value="F:magnesium ion binding"/>
    <property type="evidence" value="ECO:0007669"/>
    <property type="project" value="UniProtKB-UniRule"/>
</dbReference>
<dbReference type="GO" id="GO:0004540">
    <property type="term" value="F:RNA nuclease activity"/>
    <property type="evidence" value="ECO:0007669"/>
    <property type="project" value="InterPro"/>
</dbReference>
<dbReference type="CDD" id="cd09873">
    <property type="entry name" value="PIN_Pae0151-like"/>
    <property type="match status" value="1"/>
</dbReference>
<dbReference type="Gene3D" id="3.40.50.1010">
    <property type="entry name" value="5'-nuclease"/>
    <property type="match status" value="1"/>
</dbReference>
<dbReference type="HAMAP" id="MF_00265">
    <property type="entry name" value="VapC_Nob1"/>
    <property type="match status" value="1"/>
</dbReference>
<dbReference type="InterPro" id="IPR029060">
    <property type="entry name" value="PIN-like_dom_sf"/>
</dbReference>
<dbReference type="InterPro" id="IPR002716">
    <property type="entry name" value="PIN_dom"/>
</dbReference>
<dbReference type="InterPro" id="IPR044153">
    <property type="entry name" value="PIN_Pae0151-like"/>
</dbReference>
<dbReference type="InterPro" id="IPR051619">
    <property type="entry name" value="TypeII_TA_RNase_PINc/VapC"/>
</dbReference>
<dbReference type="InterPro" id="IPR022907">
    <property type="entry name" value="VapC_family"/>
</dbReference>
<dbReference type="PANTHER" id="PTHR35901:SF1">
    <property type="entry name" value="EXONUCLEASE VAPC9"/>
    <property type="match status" value="1"/>
</dbReference>
<dbReference type="PANTHER" id="PTHR35901">
    <property type="entry name" value="RIBONUCLEASE VAPC3"/>
    <property type="match status" value="1"/>
</dbReference>
<dbReference type="Pfam" id="PF01850">
    <property type="entry name" value="PIN"/>
    <property type="match status" value="1"/>
</dbReference>
<dbReference type="SUPFAM" id="SSF88723">
    <property type="entry name" value="PIN domain-like"/>
    <property type="match status" value="1"/>
</dbReference>